<organism>
    <name type="scientific">Enterococcus faecalis (strain ATCC 700802 / V583)</name>
    <dbReference type="NCBI Taxonomy" id="226185"/>
    <lineage>
        <taxon>Bacteria</taxon>
        <taxon>Bacillati</taxon>
        <taxon>Bacillota</taxon>
        <taxon>Bacilli</taxon>
        <taxon>Lactobacillales</taxon>
        <taxon>Enterococcaceae</taxon>
        <taxon>Enterococcus</taxon>
    </lineage>
</organism>
<feature type="chain" id="PRO_0000130118" description="Small ribosomal subunit protein uS3">
    <location>
        <begin position="1"/>
        <end position="218"/>
    </location>
</feature>
<feature type="domain" description="KH type-2" evidence="1">
    <location>
        <begin position="38"/>
        <end position="106"/>
    </location>
</feature>
<feature type="turn" evidence="3">
    <location>
        <begin position="7"/>
        <end position="9"/>
    </location>
</feature>
<feature type="turn" evidence="3">
    <location>
        <begin position="12"/>
        <end position="14"/>
    </location>
</feature>
<feature type="strand" evidence="3">
    <location>
        <begin position="25"/>
        <end position="28"/>
    </location>
</feature>
<feature type="helix" evidence="3">
    <location>
        <begin position="29"/>
        <end position="41"/>
    </location>
</feature>
<feature type="turn" evidence="3">
    <location>
        <begin position="42"/>
        <end position="45"/>
    </location>
</feature>
<feature type="helix" evidence="3">
    <location>
        <begin position="46"/>
        <end position="49"/>
    </location>
</feature>
<feature type="strand" evidence="3">
    <location>
        <begin position="51"/>
        <end position="58"/>
    </location>
</feature>
<feature type="strand" evidence="3">
    <location>
        <begin position="60"/>
        <end position="70"/>
    </location>
</feature>
<feature type="helix" evidence="3">
    <location>
        <begin position="73"/>
        <end position="76"/>
    </location>
</feature>
<feature type="strand" evidence="3">
    <location>
        <begin position="78"/>
        <end position="82"/>
    </location>
</feature>
<feature type="helix" evidence="3">
    <location>
        <begin position="83"/>
        <end position="94"/>
    </location>
</feature>
<feature type="strand" evidence="3">
    <location>
        <begin position="96"/>
        <end position="100"/>
    </location>
</feature>
<feature type="helix" evidence="3">
    <location>
        <begin position="108"/>
        <end position="110"/>
    </location>
</feature>
<feature type="helix" evidence="3">
    <location>
        <begin position="112"/>
        <end position="118"/>
    </location>
</feature>
<feature type="turn" evidence="3">
    <location>
        <begin position="119"/>
        <end position="122"/>
    </location>
</feature>
<feature type="helix" evidence="3">
    <location>
        <begin position="123"/>
        <end position="125"/>
    </location>
</feature>
<feature type="helix" evidence="3">
    <location>
        <begin position="129"/>
        <end position="141"/>
    </location>
</feature>
<feature type="strand" evidence="3">
    <location>
        <begin position="146"/>
        <end position="155"/>
    </location>
</feature>
<feature type="helix" evidence="3">
    <location>
        <begin position="156"/>
        <end position="158"/>
    </location>
</feature>
<feature type="strand" evidence="3">
    <location>
        <begin position="163"/>
        <end position="165"/>
    </location>
</feature>
<feature type="strand" evidence="3">
    <location>
        <begin position="168"/>
        <end position="170"/>
    </location>
</feature>
<feature type="strand" evidence="3">
    <location>
        <begin position="181"/>
        <end position="188"/>
    </location>
</feature>
<feature type="strand" evidence="3">
    <location>
        <begin position="190"/>
        <end position="193"/>
    </location>
</feature>
<feature type="strand" evidence="3">
    <location>
        <begin position="195"/>
        <end position="202"/>
    </location>
</feature>
<proteinExistence type="evidence at protein level"/>
<name>RS3_ENTFA</name>
<reference key="1">
    <citation type="journal article" date="2003" name="Science">
        <title>Role of mobile DNA in the evolution of vancomycin-resistant Enterococcus faecalis.</title>
        <authorList>
            <person name="Paulsen I.T."/>
            <person name="Banerjei L."/>
            <person name="Myers G.S.A."/>
            <person name="Nelson K.E."/>
            <person name="Seshadri R."/>
            <person name="Read T.D."/>
            <person name="Fouts D.E."/>
            <person name="Eisen J.A."/>
            <person name="Gill S.R."/>
            <person name="Heidelberg J.F."/>
            <person name="Tettelin H."/>
            <person name="Dodson R.J."/>
            <person name="Umayam L.A."/>
            <person name="Brinkac L.M."/>
            <person name="Beanan M.J."/>
            <person name="Daugherty S.C."/>
            <person name="DeBoy R.T."/>
            <person name="Durkin S.A."/>
            <person name="Kolonay J.F."/>
            <person name="Madupu R."/>
            <person name="Nelson W.C."/>
            <person name="Vamathevan J.J."/>
            <person name="Tran B."/>
            <person name="Upton J."/>
            <person name="Hansen T."/>
            <person name="Shetty J."/>
            <person name="Khouri H.M."/>
            <person name="Utterback T.R."/>
            <person name="Radune D."/>
            <person name="Ketchum K.A."/>
            <person name="Dougherty B.A."/>
            <person name="Fraser C.M."/>
        </authorList>
    </citation>
    <scope>NUCLEOTIDE SEQUENCE [LARGE SCALE GENOMIC DNA]</scope>
    <source>
        <strain>ATCC 700802 / V583</strain>
    </source>
</reference>
<keyword id="KW-0002">3D-structure</keyword>
<keyword id="KW-1185">Reference proteome</keyword>
<keyword id="KW-0687">Ribonucleoprotein</keyword>
<keyword id="KW-0689">Ribosomal protein</keyword>
<keyword id="KW-0694">RNA-binding</keyword>
<keyword id="KW-0699">rRNA-binding</keyword>
<evidence type="ECO:0000255" key="1">
    <source>
        <dbReference type="HAMAP-Rule" id="MF_01309"/>
    </source>
</evidence>
<evidence type="ECO:0000305" key="2"/>
<evidence type="ECO:0007829" key="3">
    <source>
        <dbReference type="PDB" id="6WUA"/>
    </source>
</evidence>
<accession>Q839F8</accession>
<protein>
    <recommendedName>
        <fullName evidence="1">Small ribosomal subunit protein uS3</fullName>
    </recommendedName>
    <alternativeName>
        <fullName evidence="2">30S ribosomal protein S3</fullName>
    </alternativeName>
</protein>
<dbReference type="EMBL" id="AE016830">
    <property type="protein sequence ID" value="AAO80081.1"/>
    <property type="molecule type" value="Genomic_DNA"/>
</dbReference>
<dbReference type="RefSeq" id="NP_814010.1">
    <property type="nucleotide sequence ID" value="NC_004668.1"/>
</dbReference>
<dbReference type="RefSeq" id="WP_002356207.1">
    <property type="nucleotide sequence ID" value="NZ_KE136524.1"/>
</dbReference>
<dbReference type="PDB" id="6WUA">
    <property type="method" value="EM"/>
    <property type="resolution" value="3.20 A"/>
    <property type="chains" value="c=2-205"/>
</dbReference>
<dbReference type="PDB" id="7P7Q">
    <property type="method" value="EM"/>
    <property type="resolution" value="2.40 A"/>
    <property type="chains" value="d=1-218"/>
</dbReference>
<dbReference type="PDB" id="7P7R">
    <property type="method" value="EM"/>
    <property type="resolution" value="2.90 A"/>
    <property type="chains" value="d=1-218"/>
</dbReference>
<dbReference type="PDBsum" id="6WUA"/>
<dbReference type="PDBsum" id="7P7Q"/>
<dbReference type="PDBsum" id="7P7R"/>
<dbReference type="EMDB" id="EMD-13241"/>
<dbReference type="EMDB" id="EMD-13242"/>
<dbReference type="SMR" id="Q839F8"/>
<dbReference type="STRING" id="226185.EF_0212"/>
<dbReference type="EnsemblBacteria" id="AAO80081">
    <property type="protein sequence ID" value="AAO80081"/>
    <property type="gene ID" value="EF_0212"/>
</dbReference>
<dbReference type="GeneID" id="60892707"/>
<dbReference type="KEGG" id="efa:EF0212"/>
<dbReference type="PATRIC" id="fig|226185.45.peg.54"/>
<dbReference type="eggNOG" id="COG0092">
    <property type="taxonomic scope" value="Bacteria"/>
</dbReference>
<dbReference type="HOGENOM" id="CLU_058591_0_2_9"/>
<dbReference type="Proteomes" id="UP000001415">
    <property type="component" value="Chromosome"/>
</dbReference>
<dbReference type="GO" id="GO:0022627">
    <property type="term" value="C:cytosolic small ribosomal subunit"/>
    <property type="evidence" value="ECO:0007669"/>
    <property type="project" value="TreeGrafter"/>
</dbReference>
<dbReference type="GO" id="GO:0003729">
    <property type="term" value="F:mRNA binding"/>
    <property type="evidence" value="ECO:0007669"/>
    <property type="project" value="UniProtKB-UniRule"/>
</dbReference>
<dbReference type="GO" id="GO:0019843">
    <property type="term" value="F:rRNA binding"/>
    <property type="evidence" value="ECO:0007669"/>
    <property type="project" value="UniProtKB-UniRule"/>
</dbReference>
<dbReference type="GO" id="GO:0003735">
    <property type="term" value="F:structural constituent of ribosome"/>
    <property type="evidence" value="ECO:0007669"/>
    <property type="project" value="InterPro"/>
</dbReference>
<dbReference type="GO" id="GO:0006412">
    <property type="term" value="P:translation"/>
    <property type="evidence" value="ECO:0007669"/>
    <property type="project" value="UniProtKB-UniRule"/>
</dbReference>
<dbReference type="CDD" id="cd02412">
    <property type="entry name" value="KH-II_30S_S3"/>
    <property type="match status" value="1"/>
</dbReference>
<dbReference type="FunFam" id="3.30.1140.32:FF:000001">
    <property type="entry name" value="30S ribosomal protein S3"/>
    <property type="match status" value="1"/>
</dbReference>
<dbReference type="FunFam" id="3.30.300.20:FF:000001">
    <property type="entry name" value="30S ribosomal protein S3"/>
    <property type="match status" value="1"/>
</dbReference>
<dbReference type="Gene3D" id="3.30.300.20">
    <property type="match status" value="1"/>
</dbReference>
<dbReference type="Gene3D" id="3.30.1140.32">
    <property type="entry name" value="Ribosomal protein S3, C-terminal domain"/>
    <property type="match status" value="1"/>
</dbReference>
<dbReference type="HAMAP" id="MF_01309_B">
    <property type="entry name" value="Ribosomal_uS3_B"/>
    <property type="match status" value="1"/>
</dbReference>
<dbReference type="InterPro" id="IPR004087">
    <property type="entry name" value="KH_dom"/>
</dbReference>
<dbReference type="InterPro" id="IPR015946">
    <property type="entry name" value="KH_dom-like_a/b"/>
</dbReference>
<dbReference type="InterPro" id="IPR004044">
    <property type="entry name" value="KH_dom_type_2"/>
</dbReference>
<dbReference type="InterPro" id="IPR009019">
    <property type="entry name" value="KH_sf_prok-type"/>
</dbReference>
<dbReference type="InterPro" id="IPR036419">
    <property type="entry name" value="Ribosomal_S3_C_sf"/>
</dbReference>
<dbReference type="InterPro" id="IPR005704">
    <property type="entry name" value="Ribosomal_uS3_bac-typ"/>
</dbReference>
<dbReference type="InterPro" id="IPR001351">
    <property type="entry name" value="Ribosomal_uS3_C"/>
</dbReference>
<dbReference type="InterPro" id="IPR018280">
    <property type="entry name" value="Ribosomal_uS3_CS"/>
</dbReference>
<dbReference type="NCBIfam" id="TIGR01009">
    <property type="entry name" value="rpsC_bact"/>
    <property type="match status" value="1"/>
</dbReference>
<dbReference type="PANTHER" id="PTHR11760">
    <property type="entry name" value="30S/40S RIBOSOMAL PROTEIN S3"/>
    <property type="match status" value="1"/>
</dbReference>
<dbReference type="PANTHER" id="PTHR11760:SF19">
    <property type="entry name" value="SMALL RIBOSOMAL SUBUNIT PROTEIN US3C"/>
    <property type="match status" value="1"/>
</dbReference>
<dbReference type="Pfam" id="PF07650">
    <property type="entry name" value="KH_2"/>
    <property type="match status" value="1"/>
</dbReference>
<dbReference type="Pfam" id="PF00189">
    <property type="entry name" value="Ribosomal_S3_C"/>
    <property type="match status" value="1"/>
</dbReference>
<dbReference type="SMART" id="SM00322">
    <property type="entry name" value="KH"/>
    <property type="match status" value="1"/>
</dbReference>
<dbReference type="SUPFAM" id="SSF54814">
    <property type="entry name" value="Prokaryotic type KH domain (KH-domain type II)"/>
    <property type="match status" value="1"/>
</dbReference>
<dbReference type="SUPFAM" id="SSF54821">
    <property type="entry name" value="Ribosomal protein S3 C-terminal domain"/>
    <property type="match status" value="1"/>
</dbReference>
<dbReference type="PROSITE" id="PS50823">
    <property type="entry name" value="KH_TYPE_2"/>
    <property type="match status" value="1"/>
</dbReference>
<dbReference type="PROSITE" id="PS00548">
    <property type="entry name" value="RIBOSOMAL_S3"/>
    <property type="match status" value="1"/>
</dbReference>
<sequence length="218" mass="24370">MGQKVHPIGMRVGIIRDWDAKWYAEKEYAEFLHEDLRIRKFIATKLADAAVSTIEIERAANRVNISIHTAKPGMVIGKGGSEVENLRKELNKLTGKRVHINIVEIKKPDLDAKLVGEGIARQLENRVAFRRAQKQAIQRAMRAGAKGIKTQVSGRLNGADIARSEGYSEGTVPLHTLRADIDYAWEEADTTYGKLGVKVWIYRGEILPTKKNTEKGGK</sequence>
<comment type="function">
    <text evidence="1">Binds the lower part of the 30S subunit head. Binds mRNA in the 70S ribosome, positioning it for translation.</text>
</comment>
<comment type="subunit">
    <text evidence="1">Part of the 30S ribosomal subunit. Forms a tight complex with proteins S10 and S14.</text>
</comment>
<comment type="similarity">
    <text evidence="1">Belongs to the universal ribosomal protein uS3 family.</text>
</comment>
<gene>
    <name evidence="1" type="primary">rpsC</name>
    <name type="ordered locus">EF_0212</name>
</gene>